<name>NTPPA_NEIMA</name>
<keyword id="KW-0963">Cytoplasm</keyword>
<keyword id="KW-0378">Hydrolase</keyword>
<keyword id="KW-0546">Nucleotide metabolism</keyword>
<comment type="function">
    <text evidence="1">Nucleoside triphosphate pyrophosphatase that hydrolyzes dTTP and UTP. May have a dual role in cell division arrest and in preventing the incorporation of modified nucleotides into cellular nucleic acids.</text>
</comment>
<comment type="catalytic activity">
    <reaction evidence="1">
        <text>dTTP + H2O = dTMP + diphosphate + H(+)</text>
        <dbReference type="Rhea" id="RHEA:28534"/>
        <dbReference type="ChEBI" id="CHEBI:15377"/>
        <dbReference type="ChEBI" id="CHEBI:15378"/>
        <dbReference type="ChEBI" id="CHEBI:33019"/>
        <dbReference type="ChEBI" id="CHEBI:37568"/>
        <dbReference type="ChEBI" id="CHEBI:63528"/>
        <dbReference type="EC" id="3.6.1.9"/>
    </reaction>
</comment>
<comment type="catalytic activity">
    <reaction evidence="1">
        <text>UTP + H2O = UMP + diphosphate + H(+)</text>
        <dbReference type="Rhea" id="RHEA:29395"/>
        <dbReference type="ChEBI" id="CHEBI:15377"/>
        <dbReference type="ChEBI" id="CHEBI:15378"/>
        <dbReference type="ChEBI" id="CHEBI:33019"/>
        <dbReference type="ChEBI" id="CHEBI:46398"/>
        <dbReference type="ChEBI" id="CHEBI:57865"/>
        <dbReference type="EC" id="3.6.1.9"/>
    </reaction>
</comment>
<comment type="cofactor">
    <cofactor evidence="1">
        <name>a divalent metal cation</name>
        <dbReference type="ChEBI" id="CHEBI:60240"/>
    </cofactor>
</comment>
<comment type="subcellular location">
    <subcellularLocation>
        <location evidence="1">Cytoplasm</location>
    </subcellularLocation>
</comment>
<comment type="similarity">
    <text evidence="1">Belongs to the Maf family. YhdE subfamily.</text>
</comment>
<feature type="chain" id="PRO_0000123032" description="dTTP/UTP pyrophosphatase">
    <location>
        <begin position="1"/>
        <end position="201"/>
    </location>
</feature>
<feature type="active site" description="Proton acceptor" evidence="1">
    <location>
        <position position="76"/>
    </location>
</feature>
<feature type="site" description="Important for substrate specificity" evidence="1">
    <location>
        <position position="12"/>
    </location>
</feature>
<feature type="site" description="Important for substrate specificity" evidence="1">
    <location>
        <position position="77"/>
    </location>
</feature>
<feature type="site" description="Important for substrate specificity" evidence="1">
    <location>
        <position position="159"/>
    </location>
</feature>
<protein>
    <recommendedName>
        <fullName evidence="1">dTTP/UTP pyrophosphatase</fullName>
        <shortName evidence="1">dTTPase/UTPase</shortName>
        <ecNumber evidence="1">3.6.1.9</ecNumber>
    </recommendedName>
    <alternativeName>
        <fullName evidence="1">Nucleoside triphosphate pyrophosphatase</fullName>
    </alternativeName>
    <alternativeName>
        <fullName evidence="1">Nucleotide pyrophosphatase</fullName>
        <shortName evidence="1">Nucleotide PPase</shortName>
    </alternativeName>
</protein>
<accession>Q9JVK3</accession>
<accession>A1IQL5</accession>
<evidence type="ECO:0000255" key="1">
    <source>
        <dbReference type="HAMAP-Rule" id="MF_00528"/>
    </source>
</evidence>
<dbReference type="EC" id="3.6.1.9" evidence="1"/>
<dbReference type="EMBL" id="AL157959">
    <property type="protein sequence ID" value="CAM08047.1"/>
    <property type="molecule type" value="Genomic_DNA"/>
</dbReference>
<dbReference type="PIR" id="B81925">
    <property type="entry name" value="B81925"/>
</dbReference>
<dbReference type="RefSeq" id="WP_002246844.1">
    <property type="nucleotide sequence ID" value="NC_003116.1"/>
</dbReference>
<dbReference type="SMR" id="Q9JVK3"/>
<dbReference type="EnsemblBacteria" id="CAM08047">
    <property type="protein sequence ID" value="CAM08047"/>
    <property type="gene ID" value="NMA0802"/>
</dbReference>
<dbReference type="GeneID" id="93386572"/>
<dbReference type="KEGG" id="nma:NMA0802"/>
<dbReference type="HOGENOM" id="CLU_040416_2_1_4"/>
<dbReference type="Proteomes" id="UP000000626">
    <property type="component" value="Chromosome"/>
</dbReference>
<dbReference type="GO" id="GO:0005737">
    <property type="term" value="C:cytoplasm"/>
    <property type="evidence" value="ECO:0007669"/>
    <property type="project" value="UniProtKB-SubCell"/>
</dbReference>
<dbReference type="GO" id="GO:0036218">
    <property type="term" value="F:dTTP diphosphatase activity"/>
    <property type="evidence" value="ECO:0007669"/>
    <property type="project" value="RHEA"/>
</dbReference>
<dbReference type="GO" id="GO:0036221">
    <property type="term" value="F:UTP diphosphatase activity"/>
    <property type="evidence" value="ECO:0007669"/>
    <property type="project" value="RHEA"/>
</dbReference>
<dbReference type="GO" id="GO:0009117">
    <property type="term" value="P:nucleotide metabolic process"/>
    <property type="evidence" value="ECO:0007669"/>
    <property type="project" value="UniProtKB-KW"/>
</dbReference>
<dbReference type="CDD" id="cd00555">
    <property type="entry name" value="Maf"/>
    <property type="match status" value="1"/>
</dbReference>
<dbReference type="Gene3D" id="3.90.950.10">
    <property type="match status" value="1"/>
</dbReference>
<dbReference type="HAMAP" id="MF_00528">
    <property type="entry name" value="Maf"/>
    <property type="match status" value="1"/>
</dbReference>
<dbReference type="InterPro" id="IPR029001">
    <property type="entry name" value="ITPase-like_fam"/>
</dbReference>
<dbReference type="InterPro" id="IPR003697">
    <property type="entry name" value="Maf-like"/>
</dbReference>
<dbReference type="NCBIfam" id="TIGR00172">
    <property type="entry name" value="maf"/>
    <property type="match status" value="1"/>
</dbReference>
<dbReference type="NCBIfam" id="NF010947">
    <property type="entry name" value="PRK14367.1"/>
    <property type="match status" value="1"/>
</dbReference>
<dbReference type="PANTHER" id="PTHR43213">
    <property type="entry name" value="BIFUNCTIONAL DTTP/UTP PYROPHOSPHATASE/METHYLTRANSFERASE PROTEIN-RELATED"/>
    <property type="match status" value="1"/>
</dbReference>
<dbReference type="PANTHER" id="PTHR43213:SF5">
    <property type="entry name" value="BIFUNCTIONAL DTTP_UTP PYROPHOSPHATASE_METHYLTRANSFERASE PROTEIN-RELATED"/>
    <property type="match status" value="1"/>
</dbReference>
<dbReference type="Pfam" id="PF02545">
    <property type="entry name" value="Maf"/>
    <property type="match status" value="1"/>
</dbReference>
<dbReference type="PIRSF" id="PIRSF006305">
    <property type="entry name" value="Maf"/>
    <property type="match status" value="1"/>
</dbReference>
<dbReference type="SUPFAM" id="SSF52972">
    <property type="entry name" value="ITPase-like"/>
    <property type="match status" value="1"/>
</dbReference>
<gene>
    <name type="ordered locus">NMA0802</name>
</gene>
<sequence>MNTLYLGSNSPRRMEILTQLGYQVVKLPANIDETVRQNEDPARYVQRMAEEKNRTALTLFCETNGTMPDFPLITADTCVVSAGIILGKPHSQAEAIEFLNRLSGKQHTVLTAVCIHYRGNAENRVQTNRVVFKPLSSEEISAYVQSGEPMDKAGAYAVQGIGSIFIQSIEGSFSGIMGLPVYETVSMLQDLGYRTPPFIRA</sequence>
<reference key="1">
    <citation type="journal article" date="2000" name="Nature">
        <title>Complete DNA sequence of a serogroup A strain of Neisseria meningitidis Z2491.</title>
        <authorList>
            <person name="Parkhill J."/>
            <person name="Achtman M."/>
            <person name="James K.D."/>
            <person name="Bentley S.D."/>
            <person name="Churcher C.M."/>
            <person name="Klee S.R."/>
            <person name="Morelli G."/>
            <person name="Basham D."/>
            <person name="Brown D."/>
            <person name="Chillingworth T."/>
            <person name="Davies R.M."/>
            <person name="Davis P."/>
            <person name="Devlin K."/>
            <person name="Feltwell T."/>
            <person name="Hamlin N."/>
            <person name="Holroyd S."/>
            <person name="Jagels K."/>
            <person name="Leather S."/>
            <person name="Moule S."/>
            <person name="Mungall K.L."/>
            <person name="Quail M.A."/>
            <person name="Rajandream M.A."/>
            <person name="Rutherford K.M."/>
            <person name="Simmonds M."/>
            <person name="Skelton J."/>
            <person name="Whitehead S."/>
            <person name="Spratt B.G."/>
            <person name="Barrell B.G."/>
        </authorList>
    </citation>
    <scope>NUCLEOTIDE SEQUENCE [LARGE SCALE GENOMIC DNA]</scope>
    <source>
        <strain>DSM 15465 / Z2491</strain>
    </source>
</reference>
<proteinExistence type="inferred from homology"/>
<organism>
    <name type="scientific">Neisseria meningitidis serogroup A / serotype 4A (strain DSM 15465 / Z2491)</name>
    <dbReference type="NCBI Taxonomy" id="122587"/>
    <lineage>
        <taxon>Bacteria</taxon>
        <taxon>Pseudomonadati</taxon>
        <taxon>Pseudomonadota</taxon>
        <taxon>Betaproteobacteria</taxon>
        <taxon>Neisseriales</taxon>
        <taxon>Neisseriaceae</taxon>
        <taxon>Neisseria</taxon>
    </lineage>
</organism>